<proteinExistence type="inferred from homology"/>
<gene>
    <name type="primary">xgeA</name>
    <name type="ORF">AFUB_005070</name>
</gene>
<comment type="function">
    <text evidence="1">Catalyzes endohydrolysis of 1,4-beta-D-glucosidic linkages in xyloglucan with retention of the beta-configuration of the glycosyl residues. Specific for xyloglucan and does not hydrolyze other cell wall components (By similarity).</text>
</comment>
<comment type="catalytic activity">
    <reaction>
        <text>xyloglucan + H2O = xyloglucan oligosaccharides.</text>
        <dbReference type="EC" id="3.2.1.151"/>
    </reaction>
</comment>
<comment type="subcellular location">
    <subcellularLocation>
        <location evidence="3">Secreted</location>
    </subcellularLocation>
</comment>
<comment type="similarity">
    <text evidence="3">Belongs to the glycosyl hydrolase 12 (cellulase H) family.</text>
</comment>
<reference key="1">
    <citation type="journal article" date="2008" name="PLoS Genet.">
        <title>Genomic islands in the pathogenic filamentous fungus Aspergillus fumigatus.</title>
        <authorList>
            <person name="Fedorova N.D."/>
            <person name="Khaldi N."/>
            <person name="Joardar V.S."/>
            <person name="Maiti R."/>
            <person name="Amedeo P."/>
            <person name="Anderson M.J."/>
            <person name="Crabtree J."/>
            <person name="Silva J.C."/>
            <person name="Badger J.H."/>
            <person name="Albarraq A."/>
            <person name="Angiuoli S."/>
            <person name="Bussey H."/>
            <person name="Bowyer P."/>
            <person name="Cotty P.J."/>
            <person name="Dyer P.S."/>
            <person name="Egan A."/>
            <person name="Galens K."/>
            <person name="Fraser-Liggett C.M."/>
            <person name="Haas B.J."/>
            <person name="Inman J.M."/>
            <person name="Kent R."/>
            <person name="Lemieux S."/>
            <person name="Malavazi I."/>
            <person name="Orvis J."/>
            <person name="Roemer T."/>
            <person name="Ronning C.M."/>
            <person name="Sundaram J.P."/>
            <person name="Sutton G."/>
            <person name="Turner G."/>
            <person name="Venter J.C."/>
            <person name="White O.R."/>
            <person name="Whitty B.R."/>
            <person name="Youngman P."/>
            <person name="Wolfe K.H."/>
            <person name="Goldman G.H."/>
            <person name="Wortman J.R."/>
            <person name="Jiang B."/>
            <person name="Denning D.W."/>
            <person name="Nierman W.C."/>
        </authorList>
    </citation>
    <scope>NUCLEOTIDE SEQUENCE [LARGE SCALE GENOMIC DNA]</scope>
    <source>
        <strain>CBS 144.89 / FGSC A1163 / CEA10</strain>
    </source>
</reference>
<dbReference type="EC" id="3.2.1.151"/>
<dbReference type="EMBL" id="DS499594">
    <property type="protein sequence ID" value="EDP55811.1"/>
    <property type="molecule type" value="Genomic_DNA"/>
</dbReference>
<dbReference type="SMR" id="B0XNQ1"/>
<dbReference type="GlyCosmos" id="B0XNQ1">
    <property type="glycosylation" value="2 sites, No reported glycans"/>
</dbReference>
<dbReference type="EnsemblFungi" id="EDP55811">
    <property type="protein sequence ID" value="EDP55811"/>
    <property type="gene ID" value="AFUB_005070"/>
</dbReference>
<dbReference type="VEuPathDB" id="FungiDB:AFUB_005070"/>
<dbReference type="HOGENOM" id="CLU_051064_0_1_1"/>
<dbReference type="OrthoDB" id="67868at5052"/>
<dbReference type="PhylomeDB" id="B0XNQ1"/>
<dbReference type="Proteomes" id="UP000001699">
    <property type="component" value="Unassembled WGS sequence"/>
</dbReference>
<dbReference type="GO" id="GO:0005576">
    <property type="term" value="C:extracellular region"/>
    <property type="evidence" value="ECO:0007669"/>
    <property type="project" value="UniProtKB-SubCell"/>
</dbReference>
<dbReference type="GO" id="GO:0008810">
    <property type="term" value="F:cellulase activity"/>
    <property type="evidence" value="ECO:0007669"/>
    <property type="project" value="InterPro"/>
</dbReference>
<dbReference type="GO" id="GO:0033946">
    <property type="term" value="F:xyloglucan-specific endo-beta-1,4-glucanase activity"/>
    <property type="evidence" value="ECO:0007669"/>
    <property type="project" value="UniProtKB-EC"/>
</dbReference>
<dbReference type="GO" id="GO:0071555">
    <property type="term" value="P:cell wall organization"/>
    <property type="evidence" value="ECO:0007669"/>
    <property type="project" value="UniProtKB-KW"/>
</dbReference>
<dbReference type="GO" id="GO:0000272">
    <property type="term" value="P:polysaccharide catabolic process"/>
    <property type="evidence" value="ECO:0007669"/>
    <property type="project" value="UniProtKB-KW"/>
</dbReference>
<dbReference type="Gene3D" id="2.60.120.180">
    <property type="match status" value="1"/>
</dbReference>
<dbReference type="InterPro" id="IPR013320">
    <property type="entry name" value="ConA-like_dom_sf"/>
</dbReference>
<dbReference type="InterPro" id="IPR013319">
    <property type="entry name" value="GH11/12"/>
</dbReference>
<dbReference type="InterPro" id="IPR002594">
    <property type="entry name" value="GH12"/>
</dbReference>
<dbReference type="PANTHER" id="PTHR34002">
    <property type="entry name" value="BLR1656 PROTEIN"/>
    <property type="match status" value="1"/>
</dbReference>
<dbReference type="PANTHER" id="PTHR34002:SF9">
    <property type="entry name" value="XYLOGLUCAN-SPECIFIC ENDO-BETA-1,4-GLUCANASE A"/>
    <property type="match status" value="1"/>
</dbReference>
<dbReference type="Pfam" id="PF01670">
    <property type="entry name" value="Glyco_hydro_12"/>
    <property type="match status" value="1"/>
</dbReference>
<dbReference type="SUPFAM" id="SSF49899">
    <property type="entry name" value="Concanavalin A-like lectins/glucanases"/>
    <property type="match status" value="1"/>
</dbReference>
<name>XGEA_ASPFC</name>
<accession>B0XNQ1</accession>
<keyword id="KW-0119">Carbohydrate metabolism</keyword>
<keyword id="KW-0961">Cell wall biogenesis/degradation</keyword>
<keyword id="KW-0325">Glycoprotein</keyword>
<keyword id="KW-0326">Glycosidase</keyword>
<keyword id="KW-0378">Hydrolase</keyword>
<keyword id="KW-0624">Polysaccharide degradation</keyword>
<keyword id="KW-0964">Secreted</keyword>
<keyword id="KW-0732">Signal</keyword>
<feature type="signal peptide" evidence="2">
    <location>
        <begin position="1"/>
        <end position="18"/>
    </location>
</feature>
<feature type="chain" id="PRO_0000394070" description="Probable xyloglucan-specific endo-beta-1,4-glucanase A">
    <location>
        <begin position="19"/>
        <end position="238"/>
    </location>
</feature>
<feature type="glycosylation site" description="N-linked (GlcNAc...) asparagine" evidence="2">
    <location>
        <position position="106"/>
    </location>
</feature>
<feature type="glycosylation site" description="N-linked (GlcNAc...) asparagine" evidence="2">
    <location>
        <position position="171"/>
    </location>
</feature>
<evidence type="ECO:0000250" key="1"/>
<evidence type="ECO:0000255" key="2"/>
<evidence type="ECO:0000305" key="3"/>
<sequence length="238" mass="25298">MKLSLSVALSLAAATAQAATQFCDQWGSVTEGNYILYNNLWGQAQATSGSQCTTFESLSGNTIVWNTKWSWSGGQGQVKSFANAALQFTPKKLSSVKSIDSTWKWNYSGSNIVADVAYDMFLSTSPGGDHNYEIMVWLGALGGAGPISSTGSPIATPTVAGIKFNLYLGPNGSMQVYSFVAQSTTNSFSGDMRDFFTYLESNQGLSSDLYLVDVQAGTEPFSGSNAVFTVSDYSVSVA</sequence>
<protein>
    <recommendedName>
        <fullName>Probable xyloglucan-specific endo-beta-1,4-glucanase A</fullName>
        <ecNumber>3.2.1.151</ecNumber>
    </recommendedName>
    <alternativeName>
        <fullName>Xyloglucanase A</fullName>
    </alternativeName>
    <alternativeName>
        <fullName>Xyloglucanendohydrolase A</fullName>
    </alternativeName>
</protein>
<organism>
    <name type="scientific">Aspergillus fumigatus (strain CBS 144.89 / FGSC A1163 / CEA10)</name>
    <name type="common">Neosartorya fumigata</name>
    <dbReference type="NCBI Taxonomy" id="451804"/>
    <lineage>
        <taxon>Eukaryota</taxon>
        <taxon>Fungi</taxon>
        <taxon>Dikarya</taxon>
        <taxon>Ascomycota</taxon>
        <taxon>Pezizomycotina</taxon>
        <taxon>Eurotiomycetes</taxon>
        <taxon>Eurotiomycetidae</taxon>
        <taxon>Eurotiales</taxon>
        <taxon>Aspergillaceae</taxon>
        <taxon>Aspergillus</taxon>
        <taxon>Aspergillus subgen. Fumigati</taxon>
    </lineage>
</organism>